<proteinExistence type="inferred from homology"/>
<feature type="chain" id="PRO_0000113911" description="Protein GrpE">
    <location>
        <begin position="1"/>
        <end position="180"/>
    </location>
</feature>
<dbReference type="EMBL" id="AE017261">
    <property type="protein sequence ID" value="AAT43424.1"/>
    <property type="molecule type" value="Genomic_DNA"/>
</dbReference>
<dbReference type="SMR" id="Q6L0S8"/>
<dbReference type="STRING" id="263820.PTO0839"/>
<dbReference type="PaxDb" id="263820-PTO0839"/>
<dbReference type="KEGG" id="pto:PTO0839"/>
<dbReference type="PATRIC" id="fig|263820.9.peg.877"/>
<dbReference type="eggNOG" id="arCOG04772">
    <property type="taxonomic scope" value="Archaea"/>
</dbReference>
<dbReference type="HOGENOM" id="CLU_057217_5_2_2"/>
<dbReference type="InParanoid" id="Q6L0S8"/>
<dbReference type="OrthoDB" id="56041at2157"/>
<dbReference type="Proteomes" id="UP000000438">
    <property type="component" value="Chromosome"/>
</dbReference>
<dbReference type="GO" id="GO:0005737">
    <property type="term" value="C:cytoplasm"/>
    <property type="evidence" value="ECO:0007669"/>
    <property type="project" value="UniProtKB-SubCell"/>
</dbReference>
<dbReference type="GO" id="GO:0000774">
    <property type="term" value="F:adenyl-nucleotide exchange factor activity"/>
    <property type="evidence" value="ECO:0007669"/>
    <property type="project" value="InterPro"/>
</dbReference>
<dbReference type="GO" id="GO:0042803">
    <property type="term" value="F:protein homodimerization activity"/>
    <property type="evidence" value="ECO:0007669"/>
    <property type="project" value="InterPro"/>
</dbReference>
<dbReference type="GO" id="GO:0051087">
    <property type="term" value="F:protein-folding chaperone binding"/>
    <property type="evidence" value="ECO:0007669"/>
    <property type="project" value="InterPro"/>
</dbReference>
<dbReference type="GO" id="GO:0051082">
    <property type="term" value="F:unfolded protein binding"/>
    <property type="evidence" value="ECO:0007669"/>
    <property type="project" value="TreeGrafter"/>
</dbReference>
<dbReference type="GO" id="GO:0006457">
    <property type="term" value="P:protein folding"/>
    <property type="evidence" value="ECO:0007669"/>
    <property type="project" value="InterPro"/>
</dbReference>
<dbReference type="CDD" id="cd00446">
    <property type="entry name" value="GrpE"/>
    <property type="match status" value="1"/>
</dbReference>
<dbReference type="Gene3D" id="3.90.20.20">
    <property type="match status" value="1"/>
</dbReference>
<dbReference type="Gene3D" id="2.30.22.10">
    <property type="entry name" value="Head domain of nucleotide exchange factor GrpE"/>
    <property type="match status" value="1"/>
</dbReference>
<dbReference type="HAMAP" id="MF_01151">
    <property type="entry name" value="GrpE"/>
    <property type="match status" value="1"/>
</dbReference>
<dbReference type="InterPro" id="IPR000740">
    <property type="entry name" value="GrpE"/>
</dbReference>
<dbReference type="InterPro" id="IPR013805">
    <property type="entry name" value="GrpE_coiled_coil"/>
</dbReference>
<dbReference type="InterPro" id="IPR009012">
    <property type="entry name" value="GrpE_head"/>
</dbReference>
<dbReference type="PANTHER" id="PTHR21237">
    <property type="entry name" value="GRPE PROTEIN"/>
    <property type="match status" value="1"/>
</dbReference>
<dbReference type="PANTHER" id="PTHR21237:SF23">
    <property type="entry name" value="GRPE PROTEIN HOMOLOG, MITOCHONDRIAL"/>
    <property type="match status" value="1"/>
</dbReference>
<dbReference type="Pfam" id="PF01025">
    <property type="entry name" value="GrpE"/>
    <property type="match status" value="1"/>
</dbReference>
<dbReference type="PRINTS" id="PR00773">
    <property type="entry name" value="GRPEPROTEIN"/>
</dbReference>
<dbReference type="SUPFAM" id="SSF58014">
    <property type="entry name" value="Coiled-coil domain of nucleotide exchange factor GrpE"/>
    <property type="match status" value="1"/>
</dbReference>
<dbReference type="SUPFAM" id="SSF51064">
    <property type="entry name" value="Head domain of nucleotide exchange factor GrpE"/>
    <property type="match status" value="1"/>
</dbReference>
<dbReference type="PROSITE" id="PS01071">
    <property type="entry name" value="GRPE"/>
    <property type="match status" value="1"/>
</dbReference>
<reference key="1">
    <citation type="journal article" date="2004" name="Proc. Natl. Acad. Sci. U.S.A.">
        <title>Genome sequence of Picrophilus torridus and its implications for life around pH 0.</title>
        <authorList>
            <person name="Fuetterer O."/>
            <person name="Angelov A."/>
            <person name="Liesegang H."/>
            <person name="Gottschalk G."/>
            <person name="Schleper C."/>
            <person name="Schepers B."/>
            <person name="Dock C."/>
            <person name="Antranikian G."/>
            <person name="Liebl W."/>
        </authorList>
    </citation>
    <scope>NUCLEOTIDE SEQUENCE [LARGE SCALE GENOMIC DNA]</scope>
    <source>
        <strain>ATCC 700027 / DSM 9790 / JCM 10055 / NBRC 100828 / KAW 2/3</strain>
    </source>
</reference>
<gene>
    <name evidence="1" type="primary">grpE</name>
    <name type="ordered locus">PTO0839</name>
</gene>
<protein>
    <recommendedName>
        <fullName evidence="1">Protein GrpE</fullName>
    </recommendedName>
    <alternativeName>
        <fullName evidence="1">HSP-70 cofactor</fullName>
    </alternativeName>
</protein>
<organism>
    <name type="scientific">Picrophilus torridus (strain ATCC 700027 / DSM 9790 / JCM 10055 / NBRC 100828 / KAW 2/3)</name>
    <dbReference type="NCBI Taxonomy" id="1122961"/>
    <lineage>
        <taxon>Archaea</taxon>
        <taxon>Methanobacteriati</taxon>
        <taxon>Thermoplasmatota</taxon>
        <taxon>Thermoplasmata</taxon>
        <taxon>Thermoplasmatales</taxon>
        <taxon>Picrophilaceae</taxon>
        <taxon>Picrophilus</taxon>
    </lineage>
</organism>
<keyword id="KW-0143">Chaperone</keyword>
<keyword id="KW-0963">Cytoplasm</keyword>
<keyword id="KW-0346">Stress response</keyword>
<name>GRPE_PICTO</name>
<comment type="function">
    <text evidence="1">Participates actively in the response to hyperosmotic and heat shock by preventing the aggregation of stress-denatured proteins, in association with DnaK and GrpE. It is the nucleotide exchange factor for DnaK and may function as a thermosensor. Unfolded proteins bind initially to DnaJ; upon interaction with the DnaJ-bound protein, DnaK hydrolyzes its bound ATP, resulting in the formation of a stable complex. GrpE releases ADP from DnaK; ATP binding to DnaK triggers the release of the substrate protein, thus completing the reaction cycle. Several rounds of ATP-dependent interactions between DnaJ, DnaK and GrpE are required for fully efficient folding.</text>
</comment>
<comment type="subunit">
    <text evidence="1">Homodimer.</text>
</comment>
<comment type="subcellular location">
    <subcellularLocation>
        <location evidence="1">Cytoplasm</location>
    </subcellularLocation>
</comment>
<comment type="similarity">
    <text evidence="1">Belongs to the GrpE family.</text>
</comment>
<sequence>MMTYNKKYIDSVEYDLIETRKRMWMMERKKNEELLKKYQQAMSDLEDYKNLYMRQRSEMENYQRYIEKTINNIKANANADLIKTMLPVLDSLDAGILHDEKLKPIRSQLIKILSNYGLKEIESRGKKFDPYLNEVVGIVKGDDDIVVEEVQKGYILNNEVLRTSKVIVSKGGNNEQDNRN</sequence>
<accession>Q6L0S8</accession>
<evidence type="ECO:0000255" key="1">
    <source>
        <dbReference type="HAMAP-Rule" id="MF_01151"/>
    </source>
</evidence>